<organism>
    <name type="scientific">Chlamydomonas reinhardtii</name>
    <name type="common">Chlamydomonas smithii</name>
    <dbReference type="NCBI Taxonomy" id="3055"/>
    <lineage>
        <taxon>Eukaryota</taxon>
        <taxon>Viridiplantae</taxon>
        <taxon>Chlorophyta</taxon>
        <taxon>core chlorophytes</taxon>
        <taxon>Chlorophyceae</taxon>
        <taxon>CS clade</taxon>
        <taxon>Chlamydomonadales</taxon>
        <taxon>Chlamydomonadaceae</taxon>
        <taxon>Chlamydomonas</taxon>
    </lineage>
</organism>
<comment type="function">
    <text evidence="4">May have a role in the remodeling of the endoplasmic reticulum upon zygote formation.</text>
</comment>
<comment type="subcellular location">
    <subcellularLocation>
        <location evidence="3">Endoplasmic reticulum lumen</location>
    </subcellularLocation>
</comment>
<comment type="alternative products">
    <event type="alternative splicing"/>
    <isoform>
        <id>Q8GSP8-1</id>
        <name evidence="3">1</name>
        <sequence type="displayed"/>
    </isoform>
    <isoform>
        <id>Q8GSP8-2</id>
        <name evidence="3">2</name>
        <sequence type="described" ref="VSP_014165"/>
    </isoform>
</comment>
<comment type="developmental stage">
    <text evidence="3">Isoform 1 and isoform 2 are expressed 2-22 hours after zygote formation with highest level at 6 hours. Isoform 2 is expressed at low level.</text>
</comment>
<name>ZYS3_CHLRE</name>
<proteinExistence type="evidence at transcript level"/>
<reference evidence="5 6" key="1">
    <citation type="journal article" date="1999" name="Plant Physiol.">
        <title>Characterization of Chlamydomonas reinhardtii zygote-specific cDNAs that encode novel proteins containing ankyrin repeats and WW domains.</title>
        <authorList>
            <person name="Kuriyama H."/>
            <person name="Takano H."/>
            <person name="Suzuki H."/>
            <person name="Uchida H."/>
            <person name="Kawano S."/>
            <person name="Kuroiwa H."/>
            <person name="Kuroiwa T."/>
        </authorList>
    </citation>
    <scope>NUCLEOTIDE SEQUENCE [MRNA] (ISOFORMS 1 AND 2)</scope>
    <scope>SUBCELLULAR LOCATION</scope>
    <scope>DEVELOPMENTAL STAGE</scope>
    <source>
        <strain evidence="3">137c / CC-125</strain>
    </source>
</reference>
<reference evidence="5 7" key="2">
    <citation type="submission" date="2002-08" db="EMBL/GenBank/DDBJ databases">
        <title>Isolation and characterization of zys3 gene in Chlamydomonas reinhardtii.</title>
        <authorList>
            <person name="Uchida H."/>
            <person name="Suzuki K."/>
            <person name="Tanifuji G."/>
            <person name="Hara Y."/>
        </authorList>
    </citation>
    <scope>NUCLEOTIDE SEQUENCE [GENOMIC DNA] (ISOFORMS 1 AND 2)</scope>
    <source>
        <strain>137c / CC-125</strain>
    </source>
</reference>
<reference evidence="5 7" key="3">
    <citation type="submission" date="2001-05" db="EMBL/GenBank/DDBJ databases">
        <authorList>
            <person name="Woessner J.P."/>
        </authorList>
    </citation>
    <scope>NUCLEOTIDE SEQUENCE [GENOMIC DNA] OF 1-334 (ISOFORM 1)</scope>
</reference>
<protein>
    <recommendedName>
        <fullName>Zygote-specific protein 3</fullName>
    </recommendedName>
</protein>
<sequence length="371" mass="39336">MLRSAGRVAAVALLALFALGCVSAAAKPSTDRLVAAIKSKNLSAVVDALSVKGLDVNTPDSTRRLPLVEAARSRDARLVGALLDQGALARVSDGTTTPLHLSMQGGSAAIVKLLLAHGADPNAKDKTGASARSTAAAVKELADLLKQWDARGAMAFEDEPGAWIREERDGQSYYWKPANGESRWAVPPSCAWQRVTVQGHPIKYINSLTGQETTRVPPALAWARVTAADGSALWLNWASRVASAAATAPAELPAELAAELAMHPNRRWYNTATREYVYTDPAYATPWRELVDEASGAPFFFNVETGDTTWELPAALAWTEVIESSSGADGESGSGSEAGPRYFHNTVSGEVAWSAPEGSRHVFVEASAADL</sequence>
<feature type="signal peptide" evidence="1">
    <location>
        <begin position="1"/>
        <end position="24"/>
    </location>
</feature>
<feature type="chain" id="PRO_0000001623" description="Zygote-specific protein 3" evidence="1">
    <location>
        <begin position="25"/>
        <end position="371"/>
    </location>
</feature>
<feature type="repeat" description="ANK 1" evidence="1">
    <location>
        <begin position="62"/>
        <end position="91"/>
    </location>
</feature>
<feature type="repeat" description="ANK 2" evidence="1">
    <location>
        <begin position="94"/>
        <end position="123"/>
    </location>
</feature>
<feature type="domain" description="WW 1" evidence="2">
    <location>
        <begin position="159"/>
        <end position="187"/>
    </location>
</feature>
<feature type="domain" description="WW 2" evidence="2">
    <location>
        <begin position="283"/>
        <end position="313"/>
    </location>
</feature>
<feature type="glycosylation site" description="N-linked (GlcNAc...) asparagine" evidence="1">
    <location>
        <position position="41"/>
    </location>
</feature>
<feature type="splice variant" id="VSP_014165" description="In isoform 2." evidence="4">
    <location>
        <begin position="79"/>
        <end position="104"/>
    </location>
</feature>
<feature type="sequence conflict" description="In Ref. 1; BAA76762/BAA76863." evidence="5" ref="1">
    <original>A</original>
    <variation>S</variation>
    <location>
        <position position="261"/>
    </location>
</feature>
<accession>Q8GSP8</accession>
<accession>Q94F59</accession>
<accession>Q9SXM3</accession>
<accession>Q9SXM4</accession>
<gene>
    <name type="primary">ZYS3</name>
</gene>
<evidence type="ECO:0000255" key="1"/>
<evidence type="ECO:0000255" key="2">
    <source>
        <dbReference type="PROSITE-ProRule" id="PRU00224"/>
    </source>
</evidence>
<evidence type="ECO:0000269" key="3">
    <source>
    </source>
</evidence>
<evidence type="ECO:0000303" key="4">
    <source>
    </source>
</evidence>
<evidence type="ECO:0000305" key="5"/>
<evidence type="ECO:0000312" key="6">
    <source>
        <dbReference type="EMBL" id="BAA76762.1"/>
    </source>
</evidence>
<evidence type="ECO:0000312" key="7">
    <source>
        <dbReference type="EMBL" id="BAC54284.1"/>
    </source>
</evidence>
<dbReference type="EMBL" id="AB004042">
    <property type="protein sequence ID" value="BAA76762.1"/>
    <property type="molecule type" value="mRNA"/>
</dbReference>
<dbReference type="EMBL" id="AB004043">
    <property type="protein sequence ID" value="BAA76863.1"/>
    <property type="molecule type" value="mRNA"/>
</dbReference>
<dbReference type="EMBL" id="AB091098">
    <property type="protein sequence ID" value="BAC54284.1"/>
    <property type="molecule type" value="Genomic_DNA"/>
</dbReference>
<dbReference type="EMBL" id="AF385612">
    <property type="protein sequence ID" value="AAK67153.1"/>
    <property type="molecule type" value="Genomic_DNA"/>
</dbReference>
<dbReference type="RefSeq" id="XP_001700598.1">
    <molecule id="Q8GSP8-1"/>
    <property type="nucleotide sequence ID" value="XM_001700546.1"/>
</dbReference>
<dbReference type="SMR" id="Q8GSP8"/>
<dbReference type="GlyCosmos" id="Q8GSP8">
    <property type="glycosylation" value="1 site, No reported glycans"/>
</dbReference>
<dbReference type="PaxDb" id="3055-EDO97927"/>
<dbReference type="EnsemblPlants" id="PNW72600">
    <molecule id="Q8GSP8-1"/>
    <property type="protein sequence ID" value="PNW72600"/>
    <property type="gene ID" value="CHLRE_15g635400v5"/>
</dbReference>
<dbReference type="Gramene" id="PNW72600">
    <molecule id="Q8GSP8-1"/>
    <property type="protein sequence ID" value="PNW72600"/>
    <property type="gene ID" value="CHLRE_15g635400v5"/>
</dbReference>
<dbReference type="KEGG" id="cre:CHLRE_15g635400v5"/>
<dbReference type="HOGENOM" id="CLU_886696_0_0_1"/>
<dbReference type="OMA" id="TVQGHPI"/>
<dbReference type="OrthoDB" id="2367685at2759"/>
<dbReference type="GO" id="GO:0005788">
    <property type="term" value="C:endoplasmic reticulum lumen"/>
    <property type="evidence" value="ECO:0000314"/>
    <property type="project" value="UniProtKB"/>
</dbReference>
<dbReference type="GO" id="GO:0048468">
    <property type="term" value="P:cell development"/>
    <property type="evidence" value="ECO:0000303"/>
    <property type="project" value="UniProtKB"/>
</dbReference>
<dbReference type="CDD" id="cd00201">
    <property type="entry name" value="WW"/>
    <property type="match status" value="1"/>
</dbReference>
<dbReference type="Gene3D" id="2.20.70.10">
    <property type="match status" value="1"/>
</dbReference>
<dbReference type="Gene3D" id="1.25.40.20">
    <property type="entry name" value="Ankyrin repeat-containing domain"/>
    <property type="match status" value="1"/>
</dbReference>
<dbReference type="InterPro" id="IPR002110">
    <property type="entry name" value="Ankyrin_rpt"/>
</dbReference>
<dbReference type="InterPro" id="IPR036770">
    <property type="entry name" value="Ankyrin_rpt-contain_sf"/>
</dbReference>
<dbReference type="InterPro" id="IPR001202">
    <property type="entry name" value="WW_dom"/>
</dbReference>
<dbReference type="InterPro" id="IPR036020">
    <property type="entry name" value="WW_dom_sf"/>
</dbReference>
<dbReference type="PANTHER" id="PTHR24171">
    <property type="entry name" value="ANKYRIN REPEAT DOMAIN-CONTAINING PROTEIN 39-RELATED"/>
    <property type="match status" value="1"/>
</dbReference>
<dbReference type="PANTHER" id="PTHR24171:SF8">
    <property type="entry name" value="BRCA1-ASSOCIATED RING DOMAIN PROTEIN 1"/>
    <property type="match status" value="1"/>
</dbReference>
<dbReference type="Pfam" id="PF12796">
    <property type="entry name" value="Ank_2"/>
    <property type="match status" value="1"/>
</dbReference>
<dbReference type="Pfam" id="PF00397">
    <property type="entry name" value="WW"/>
    <property type="match status" value="1"/>
</dbReference>
<dbReference type="SMART" id="SM00248">
    <property type="entry name" value="ANK"/>
    <property type="match status" value="2"/>
</dbReference>
<dbReference type="SMART" id="SM00456">
    <property type="entry name" value="WW"/>
    <property type="match status" value="2"/>
</dbReference>
<dbReference type="SUPFAM" id="SSF48403">
    <property type="entry name" value="Ankyrin repeat"/>
    <property type="match status" value="1"/>
</dbReference>
<dbReference type="SUPFAM" id="SSF51045">
    <property type="entry name" value="WW domain"/>
    <property type="match status" value="1"/>
</dbReference>
<dbReference type="PROSITE" id="PS50297">
    <property type="entry name" value="ANK_REP_REGION"/>
    <property type="match status" value="1"/>
</dbReference>
<dbReference type="PROSITE" id="PS50088">
    <property type="entry name" value="ANK_REPEAT"/>
    <property type="match status" value="1"/>
</dbReference>
<dbReference type="PROSITE" id="PS01159">
    <property type="entry name" value="WW_DOMAIN_1"/>
    <property type="match status" value="2"/>
</dbReference>
<dbReference type="PROSITE" id="PS50020">
    <property type="entry name" value="WW_DOMAIN_2"/>
    <property type="match status" value="1"/>
</dbReference>
<keyword id="KW-0025">Alternative splicing</keyword>
<keyword id="KW-0040">ANK repeat</keyword>
<keyword id="KW-0256">Endoplasmic reticulum</keyword>
<keyword id="KW-0325">Glycoprotein</keyword>
<keyword id="KW-0677">Repeat</keyword>
<keyword id="KW-0732">Signal</keyword>